<proteinExistence type="inferred from homology"/>
<feature type="chain" id="PRO_1000003834" description="Nucleoid-associated protein SH2533">
    <location>
        <begin position="1"/>
        <end position="105"/>
    </location>
</feature>
<feature type="region of interest" description="Disordered" evidence="2">
    <location>
        <begin position="1"/>
        <end position="33"/>
    </location>
</feature>
<feature type="compositionally biased region" description="Low complexity" evidence="2">
    <location>
        <begin position="7"/>
        <end position="16"/>
    </location>
</feature>
<feature type="compositionally biased region" description="Basic and acidic residues" evidence="2">
    <location>
        <begin position="21"/>
        <end position="33"/>
    </location>
</feature>
<organism>
    <name type="scientific">Staphylococcus haemolyticus (strain JCSC1435)</name>
    <dbReference type="NCBI Taxonomy" id="279808"/>
    <lineage>
        <taxon>Bacteria</taxon>
        <taxon>Bacillati</taxon>
        <taxon>Bacillota</taxon>
        <taxon>Bacilli</taxon>
        <taxon>Bacillales</taxon>
        <taxon>Staphylococcaceae</taxon>
        <taxon>Staphylococcus</taxon>
    </lineage>
</organism>
<name>Y2533_STAHJ</name>
<accession>Q4L3D5</accession>
<comment type="function">
    <text evidence="1">Binds to DNA and alters its conformation. May be involved in regulation of gene expression, nucleoid organization and DNA protection.</text>
</comment>
<comment type="subunit">
    <text evidence="1">Homodimer.</text>
</comment>
<comment type="subcellular location">
    <subcellularLocation>
        <location evidence="1">Cytoplasm</location>
        <location evidence="1">Nucleoid</location>
    </subcellularLocation>
</comment>
<comment type="similarity">
    <text evidence="1">Belongs to the YbaB/EbfC family.</text>
</comment>
<sequence length="105" mass="11597">MRGGGNMQQMMKQMQKMQKKMAQEQEKLKEERIVGTAGGGMVAVTVTGHKEVVDVEIKEEAVDPDDIEMLQDLVLAATNEAMNKADELTQERLGKHTQGLNIPGM</sequence>
<keyword id="KW-0963">Cytoplasm</keyword>
<keyword id="KW-0238">DNA-binding</keyword>
<reference key="1">
    <citation type="journal article" date="2005" name="J. Bacteriol.">
        <title>Whole-genome sequencing of Staphylococcus haemolyticus uncovers the extreme plasticity of its genome and the evolution of human-colonizing staphylococcal species.</title>
        <authorList>
            <person name="Takeuchi F."/>
            <person name="Watanabe S."/>
            <person name="Baba T."/>
            <person name="Yuzawa H."/>
            <person name="Ito T."/>
            <person name="Morimoto Y."/>
            <person name="Kuroda M."/>
            <person name="Cui L."/>
            <person name="Takahashi M."/>
            <person name="Ankai A."/>
            <person name="Baba S."/>
            <person name="Fukui S."/>
            <person name="Lee J.C."/>
            <person name="Hiramatsu K."/>
        </authorList>
    </citation>
    <scope>NUCLEOTIDE SEQUENCE [LARGE SCALE GENOMIC DNA]</scope>
    <source>
        <strain>JCSC1435</strain>
    </source>
</reference>
<protein>
    <recommendedName>
        <fullName evidence="1">Nucleoid-associated protein SH2533</fullName>
    </recommendedName>
</protein>
<dbReference type="EMBL" id="AP006716">
    <property type="protein sequence ID" value="BAE05842.1"/>
    <property type="molecule type" value="Genomic_DNA"/>
</dbReference>
<dbReference type="RefSeq" id="WP_001213992.1">
    <property type="nucleotide sequence ID" value="NC_007168.1"/>
</dbReference>
<dbReference type="SMR" id="Q4L3D5"/>
<dbReference type="KEGG" id="sha:SH2533"/>
<dbReference type="eggNOG" id="COG0718">
    <property type="taxonomic scope" value="Bacteria"/>
</dbReference>
<dbReference type="HOGENOM" id="CLU_140930_1_0_9"/>
<dbReference type="OrthoDB" id="9795263at2"/>
<dbReference type="Proteomes" id="UP000000543">
    <property type="component" value="Chromosome"/>
</dbReference>
<dbReference type="GO" id="GO:0043590">
    <property type="term" value="C:bacterial nucleoid"/>
    <property type="evidence" value="ECO:0007669"/>
    <property type="project" value="UniProtKB-UniRule"/>
</dbReference>
<dbReference type="GO" id="GO:0005829">
    <property type="term" value="C:cytosol"/>
    <property type="evidence" value="ECO:0007669"/>
    <property type="project" value="TreeGrafter"/>
</dbReference>
<dbReference type="GO" id="GO:0003677">
    <property type="term" value="F:DNA binding"/>
    <property type="evidence" value="ECO:0007669"/>
    <property type="project" value="UniProtKB-UniRule"/>
</dbReference>
<dbReference type="FunFam" id="3.30.1310.10:FF:000002">
    <property type="entry name" value="Nucleoid-associated protein IKC_06587"/>
    <property type="match status" value="1"/>
</dbReference>
<dbReference type="Gene3D" id="3.30.1310.10">
    <property type="entry name" value="Nucleoid-associated protein YbaB-like domain"/>
    <property type="match status" value="1"/>
</dbReference>
<dbReference type="HAMAP" id="MF_00274">
    <property type="entry name" value="DNA_YbaB_EbfC"/>
    <property type="match status" value="1"/>
</dbReference>
<dbReference type="InterPro" id="IPR036894">
    <property type="entry name" value="YbaB-like_sf"/>
</dbReference>
<dbReference type="InterPro" id="IPR004401">
    <property type="entry name" value="YbaB/EbfC"/>
</dbReference>
<dbReference type="NCBIfam" id="TIGR00103">
    <property type="entry name" value="DNA_YbaB_EbfC"/>
    <property type="match status" value="1"/>
</dbReference>
<dbReference type="PANTHER" id="PTHR33449">
    <property type="entry name" value="NUCLEOID-ASSOCIATED PROTEIN YBAB"/>
    <property type="match status" value="1"/>
</dbReference>
<dbReference type="PANTHER" id="PTHR33449:SF1">
    <property type="entry name" value="NUCLEOID-ASSOCIATED PROTEIN YBAB"/>
    <property type="match status" value="1"/>
</dbReference>
<dbReference type="Pfam" id="PF02575">
    <property type="entry name" value="YbaB_DNA_bd"/>
    <property type="match status" value="1"/>
</dbReference>
<dbReference type="PIRSF" id="PIRSF004555">
    <property type="entry name" value="UCP004555"/>
    <property type="match status" value="1"/>
</dbReference>
<dbReference type="SUPFAM" id="SSF82607">
    <property type="entry name" value="YbaB-like"/>
    <property type="match status" value="1"/>
</dbReference>
<gene>
    <name type="ordered locus">SH2533</name>
</gene>
<evidence type="ECO:0000255" key="1">
    <source>
        <dbReference type="HAMAP-Rule" id="MF_00274"/>
    </source>
</evidence>
<evidence type="ECO:0000256" key="2">
    <source>
        <dbReference type="SAM" id="MobiDB-lite"/>
    </source>
</evidence>